<protein>
    <recommendedName>
        <fullName>Tryptophan synthase beta chain</fullName>
        <ecNumber>4.2.1.20</ecNumber>
    </recommendedName>
</protein>
<accession>P19868</accession>
<comment type="function">
    <text evidence="1">The beta subunit is responsible for the synthesis of L-tryptophan from indole and L-serine.</text>
</comment>
<comment type="catalytic activity">
    <reaction>
        <text>(1S,2R)-1-C-(indol-3-yl)glycerol 3-phosphate + L-serine = D-glyceraldehyde 3-phosphate + L-tryptophan + H2O</text>
        <dbReference type="Rhea" id="RHEA:10532"/>
        <dbReference type="ChEBI" id="CHEBI:15377"/>
        <dbReference type="ChEBI" id="CHEBI:33384"/>
        <dbReference type="ChEBI" id="CHEBI:57912"/>
        <dbReference type="ChEBI" id="CHEBI:58866"/>
        <dbReference type="ChEBI" id="CHEBI:59776"/>
        <dbReference type="EC" id="4.2.1.20"/>
    </reaction>
</comment>
<comment type="cofactor">
    <cofactor evidence="1">
        <name>pyridoxal 5'-phosphate</name>
        <dbReference type="ChEBI" id="CHEBI:597326"/>
    </cofactor>
</comment>
<comment type="pathway">
    <text>Amino-acid biosynthesis; L-tryptophan biosynthesis; L-tryptophan from chorismate: step 5/5.</text>
</comment>
<comment type="subunit">
    <text evidence="1">Tetramer of two alpha and two beta chains.</text>
</comment>
<comment type="similarity">
    <text evidence="2">Belongs to the TrpB family.</text>
</comment>
<gene>
    <name type="primary">trpB</name>
</gene>
<feature type="chain" id="PRO_0000098917" description="Tryptophan synthase beta chain">
    <location>
        <begin position="1"/>
        <end position="404"/>
    </location>
</feature>
<feature type="modified residue" description="N6-(pyridoxal phosphate)lysine" evidence="1">
    <location>
        <position position="90"/>
    </location>
</feature>
<name>TRPB_GEOSE</name>
<organism>
    <name type="scientific">Geobacillus stearothermophilus</name>
    <name type="common">Bacillus stearothermophilus</name>
    <dbReference type="NCBI Taxonomy" id="1422"/>
    <lineage>
        <taxon>Bacteria</taxon>
        <taxon>Bacillati</taxon>
        <taxon>Bacillota</taxon>
        <taxon>Bacilli</taxon>
        <taxon>Bacillales</taxon>
        <taxon>Anoxybacillaceae</taxon>
        <taxon>Geobacillus</taxon>
    </lineage>
</organism>
<proteinExistence type="inferred from homology"/>
<keyword id="KW-0028">Amino-acid biosynthesis</keyword>
<keyword id="KW-0057">Aromatic amino acid biosynthesis</keyword>
<keyword id="KW-0456">Lyase</keyword>
<keyword id="KW-0663">Pyridoxal phosphate</keyword>
<keyword id="KW-0822">Tryptophan biosynthesis</keyword>
<sequence length="404" mass="44012">MERVPNEHGRFGDFGGKFVPETLMLPLEEIEAELDKALADESFKQEYIRILQHYSGRPTPLTFAPNLTRQLGGAKMYLKREDLNHTGAHKINNAIGQALLAKRMGKKKLIAETGAGQHGVAAATVAAHFGMDCIVFMGEEDIKRQELNVFRMKLLGAEVVPVSSGNRTLKDATNEAIRYWVAHCDDHFYMIGSVVGPHPYPKMVREFQRIIGDEAKEQFLACEGKLPDVIVACVGGGSNAIGMFYPFLQDDVRLVGVEAAGKGIDTPYHAATITKGTKGVIHGAMTYLLQDEYGQIVEPYSISAGLDYPGVGPEHAYLASIGRVRYESVTDEEAVAAFRLLAQTEGIIPAIESAHAVAKAVELAQSMSPDETVLICLSGRGDKDVQTMMRHLGAKEGEDVAAIR</sequence>
<dbReference type="EC" id="4.2.1.20"/>
<dbReference type="EMBL" id="D00539">
    <property type="protein sequence ID" value="BAA00427.1"/>
    <property type="molecule type" value="Genomic_DNA"/>
</dbReference>
<dbReference type="PIR" id="JT0524">
    <property type="entry name" value="JT0524"/>
</dbReference>
<dbReference type="RefSeq" id="WP_033014004.1">
    <property type="nucleotide sequence ID" value="NZ_JARTKY010000207.1"/>
</dbReference>
<dbReference type="SMR" id="P19868"/>
<dbReference type="UniPathway" id="UPA00035">
    <property type="reaction ID" value="UER00044"/>
</dbReference>
<dbReference type="GO" id="GO:0005737">
    <property type="term" value="C:cytoplasm"/>
    <property type="evidence" value="ECO:0007669"/>
    <property type="project" value="TreeGrafter"/>
</dbReference>
<dbReference type="GO" id="GO:0004834">
    <property type="term" value="F:tryptophan synthase activity"/>
    <property type="evidence" value="ECO:0007669"/>
    <property type="project" value="UniProtKB-UniRule"/>
</dbReference>
<dbReference type="CDD" id="cd06446">
    <property type="entry name" value="Trp-synth_B"/>
    <property type="match status" value="1"/>
</dbReference>
<dbReference type="FunFam" id="3.40.50.1100:FF:000001">
    <property type="entry name" value="Tryptophan synthase beta chain"/>
    <property type="match status" value="1"/>
</dbReference>
<dbReference type="FunFam" id="3.40.50.1100:FF:000004">
    <property type="entry name" value="Tryptophan synthase beta chain"/>
    <property type="match status" value="1"/>
</dbReference>
<dbReference type="Gene3D" id="3.40.50.1100">
    <property type="match status" value="2"/>
</dbReference>
<dbReference type="HAMAP" id="MF_00133">
    <property type="entry name" value="Trp_synth_beta"/>
    <property type="match status" value="1"/>
</dbReference>
<dbReference type="InterPro" id="IPR006653">
    <property type="entry name" value="Trp_synth_b_CS"/>
</dbReference>
<dbReference type="InterPro" id="IPR006654">
    <property type="entry name" value="Trp_synth_beta"/>
</dbReference>
<dbReference type="InterPro" id="IPR023026">
    <property type="entry name" value="Trp_synth_beta/beta-like"/>
</dbReference>
<dbReference type="InterPro" id="IPR001926">
    <property type="entry name" value="TrpB-like_PALP"/>
</dbReference>
<dbReference type="InterPro" id="IPR036052">
    <property type="entry name" value="TrpB-like_PALP_sf"/>
</dbReference>
<dbReference type="NCBIfam" id="TIGR00263">
    <property type="entry name" value="trpB"/>
    <property type="match status" value="1"/>
</dbReference>
<dbReference type="PANTHER" id="PTHR48077:SF3">
    <property type="entry name" value="TRYPTOPHAN SYNTHASE"/>
    <property type="match status" value="1"/>
</dbReference>
<dbReference type="PANTHER" id="PTHR48077">
    <property type="entry name" value="TRYPTOPHAN SYNTHASE-RELATED"/>
    <property type="match status" value="1"/>
</dbReference>
<dbReference type="Pfam" id="PF00291">
    <property type="entry name" value="PALP"/>
    <property type="match status" value="1"/>
</dbReference>
<dbReference type="PIRSF" id="PIRSF001413">
    <property type="entry name" value="Trp_syn_beta"/>
    <property type="match status" value="1"/>
</dbReference>
<dbReference type="SUPFAM" id="SSF53686">
    <property type="entry name" value="Tryptophan synthase beta subunit-like PLP-dependent enzymes"/>
    <property type="match status" value="1"/>
</dbReference>
<dbReference type="PROSITE" id="PS00168">
    <property type="entry name" value="TRP_SYNTHASE_BETA"/>
    <property type="match status" value="1"/>
</dbReference>
<reference key="1">
    <citation type="journal article" date="1989" name="Agric. Biol. Chem.">
        <title>Cloning and sequencing of Bacillus stearothermophilus tryptophan synthase genes.</title>
        <authorList>
            <person name="Ishiwata K."/>
            <person name="Yoshino S."/>
            <person name="Iwamori S."/>
            <person name="Suzuki T."/>
            <person name="Makiguchi N."/>
        </authorList>
    </citation>
    <scope>NUCLEOTIDE SEQUENCE [GENOMIC DNA]</scope>
    <source>
        <strain>ATCC 7953 / DSM 5934 / JCM 9488 / NBRC 13737 / NCIB 8157 / NCTC 10007 / NCA 1518</strain>
    </source>
</reference>
<evidence type="ECO:0000250" key="1"/>
<evidence type="ECO:0000305" key="2"/>